<name>APGM1_ARCFU</name>
<accession>O28523</accession>
<organism>
    <name type="scientific">Archaeoglobus fulgidus (strain ATCC 49558 / DSM 4304 / JCM 9628 / NBRC 100126 / VC-16)</name>
    <dbReference type="NCBI Taxonomy" id="224325"/>
    <lineage>
        <taxon>Archaea</taxon>
        <taxon>Methanobacteriati</taxon>
        <taxon>Methanobacteriota</taxon>
        <taxon>Archaeoglobi</taxon>
        <taxon>Archaeoglobales</taxon>
        <taxon>Archaeoglobaceae</taxon>
        <taxon>Archaeoglobus</taxon>
    </lineage>
</organism>
<sequence>MPVLLIVVDGLSDRPIDGKTPLSVARKPNLDRLAEMGINGIMDTIAPGIRPGSDTSHLALLGYDPYKYYSGRGPIEAAGVGIEIKPGDVAFRANFATVEGEGSIFDKTVVDRRAGRIEDTSELIKALREIELPVELLVERGTGHRAAVVFRGEGLSDRVSDTDPKAVGKKVKRCVPLADDAKAKKTAEIVNEFMQKAHEVLENHPLNRERAEKGLLKANALLLRGAGEMPHVPSFKDKTGLRLCVIAATALIKGVGRVVGADVITPEGATGNKNTNLEAKVKAAINALESYDVVLLHIKATDELGHDGDFEGKKAFIEKLDEKIAPLLDLDFSKTCLILTADHSTPIKVKDHTADPVPVVIVHEDVRRDEVSSFSEFEAYKGGLCRIRGMDLLNIALDLLNIAKKFGA</sequence>
<feature type="chain" id="PRO_0000138131" description="2,3-bisphosphoglycerate-independent phosphoglycerate mutase 1">
    <location>
        <begin position="1"/>
        <end position="408"/>
    </location>
</feature>
<comment type="function">
    <text evidence="1">Catalyzes the interconversion of 2-phosphoglycerate and 3-phosphoglycerate.</text>
</comment>
<comment type="catalytic activity">
    <reaction>
        <text>(2R)-2-phosphoglycerate = (2R)-3-phosphoglycerate</text>
        <dbReference type="Rhea" id="RHEA:15901"/>
        <dbReference type="ChEBI" id="CHEBI:58272"/>
        <dbReference type="ChEBI" id="CHEBI:58289"/>
        <dbReference type="EC" id="5.4.2.12"/>
    </reaction>
</comment>
<comment type="cofactor">
    <cofactor evidence="1">
        <name>Mn(2+)</name>
        <dbReference type="ChEBI" id="CHEBI:29035"/>
    </cofactor>
</comment>
<comment type="biophysicochemical properties">
    <kinetics>
        <KM evidence="1">0.8 mM for 3-phosphoglycerate</KM>
        <KM evidence="1">0.2 mM for 2-phosphoglycerate</KM>
        <Vmax evidence="1">3.3 umol/min/mg enzyme toward 3-phosphoglycerate</Vmax>
        <Vmax evidence="1">0.8 umol/min/mg enzyme toward 2-phosphoglycerate</Vmax>
    </kinetics>
    <phDependence>
        <text evidence="1">Optimum pH is 7.1.</text>
    </phDependence>
    <temperatureDependence>
        <text evidence="1">Optimum temperature is 60 degrees Celsius. Does not lose activity after 120 minutes at 60 degrees Celsius at pH7 with 50 uM of manganese chloride and 5 mM of magnesium chloride.</text>
    </temperatureDependence>
</comment>
<comment type="pathway">
    <text>Carbohydrate degradation; glycolysis; pyruvate from D-glyceraldehyde 3-phosphate: step 3/5.</text>
</comment>
<comment type="subunit">
    <text evidence="1">Monomer.</text>
</comment>
<comment type="similarity">
    <text evidence="2">Belongs to the BPG-independent phosphoglycerate mutase family. A-PGAM subfamily.</text>
</comment>
<evidence type="ECO:0000269" key="1">
    <source>
    </source>
</evidence>
<evidence type="ECO:0000305" key="2"/>
<proteinExistence type="evidence at protein level"/>
<gene>
    <name type="primary">apgM1</name>
    <name type="ordered locus">AF_1751</name>
</gene>
<protein>
    <recommendedName>
        <fullName>2,3-bisphosphoglycerate-independent phosphoglycerate mutase 1</fullName>
        <shortName>BPG-independent PGAM 1</shortName>
        <shortName>Phosphoglyceromutase 1</shortName>
        <shortName>aPGAM 1</shortName>
        <ecNumber>5.4.2.12</ecNumber>
    </recommendedName>
</protein>
<reference key="1">
    <citation type="journal article" date="1997" name="Nature">
        <title>The complete genome sequence of the hyperthermophilic, sulphate-reducing archaeon Archaeoglobus fulgidus.</title>
        <authorList>
            <person name="Klenk H.-P."/>
            <person name="Clayton R.A."/>
            <person name="Tomb J.-F."/>
            <person name="White O."/>
            <person name="Nelson K.E."/>
            <person name="Ketchum K.A."/>
            <person name="Dodson R.J."/>
            <person name="Gwinn M.L."/>
            <person name="Hickey E.K."/>
            <person name="Peterson J.D."/>
            <person name="Richardson D.L."/>
            <person name="Kerlavage A.R."/>
            <person name="Graham D.E."/>
            <person name="Kyrpides N.C."/>
            <person name="Fleischmann R.D."/>
            <person name="Quackenbush J."/>
            <person name="Lee N.H."/>
            <person name="Sutton G.G."/>
            <person name="Gill S.R."/>
            <person name="Kirkness E.F."/>
            <person name="Dougherty B.A."/>
            <person name="McKenney K."/>
            <person name="Adams M.D."/>
            <person name="Loftus B.J."/>
            <person name="Peterson S.N."/>
            <person name="Reich C.I."/>
            <person name="McNeil L.K."/>
            <person name="Badger J.H."/>
            <person name="Glodek A."/>
            <person name="Zhou L."/>
            <person name="Overbeek R."/>
            <person name="Gocayne J.D."/>
            <person name="Weidman J.F."/>
            <person name="McDonald L.A."/>
            <person name="Utterback T.R."/>
            <person name="Cotton M.D."/>
            <person name="Spriggs T."/>
            <person name="Artiach P."/>
            <person name="Kaine B.P."/>
            <person name="Sykes S.M."/>
            <person name="Sadow P.W."/>
            <person name="D'Andrea K.P."/>
            <person name="Bowman C."/>
            <person name="Fujii C."/>
            <person name="Garland S.A."/>
            <person name="Mason T.M."/>
            <person name="Olsen G.J."/>
            <person name="Fraser C.M."/>
            <person name="Smith H.O."/>
            <person name="Woese C.R."/>
            <person name="Venter J.C."/>
        </authorList>
    </citation>
    <scope>NUCLEOTIDE SEQUENCE [LARGE SCALE GENOMIC DNA]</scope>
    <source>
        <strain>ATCC 49558 / DSM 4304 / JCM 9628 / NBRC 100126 / VC-16</strain>
    </source>
</reference>
<reference key="2">
    <citation type="journal article" date="2007" name="Extremophiles">
        <title>Characterization of cofactor-dependent and cofactor-independent phosphoglycerate mutases from Archaea.</title>
        <authorList>
            <person name="Johnsen U."/>
            <person name="Schoenheit P."/>
        </authorList>
    </citation>
    <scope>FUNCTION AS A PHOSPHOGLYCERATE MUTASE</scope>
    <scope>SUBUNIT</scope>
    <scope>COFACTOR</scope>
    <scope>BIOPHYSICOCHEMICAL PROPERTIES</scope>
    <source>
        <strain>ATCC 49558 / DSM 4304 / JCM 9628 / NBRC 100126 / VC-16</strain>
    </source>
</reference>
<keyword id="KW-0324">Glycolysis</keyword>
<keyword id="KW-0413">Isomerase</keyword>
<keyword id="KW-1185">Reference proteome</keyword>
<dbReference type="EC" id="5.4.2.12"/>
<dbReference type="EMBL" id="AE000782">
    <property type="protein sequence ID" value="AAB89499.1"/>
    <property type="molecule type" value="Genomic_DNA"/>
</dbReference>
<dbReference type="PIR" id="F69468">
    <property type="entry name" value="F69468"/>
</dbReference>
<dbReference type="RefSeq" id="WP_010879247.1">
    <property type="nucleotide sequence ID" value="NC_000917.1"/>
</dbReference>
<dbReference type="SMR" id="O28523"/>
<dbReference type="STRING" id="224325.AF_1751"/>
<dbReference type="PaxDb" id="224325-AF_1751"/>
<dbReference type="DNASU" id="1484974"/>
<dbReference type="EnsemblBacteria" id="AAB89499">
    <property type="protein sequence ID" value="AAB89499"/>
    <property type="gene ID" value="AF_1751"/>
</dbReference>
<dbReference type="KEGG" id="afu:AF_1751"/>
<dbReference type="eggNOG" id="arCOG01696">
    <property type="taxonomic scope" value="Archaea"/>
</dbReference>
<dbReference type="HOGENOM" id="CLU_034906_2_0_2"/>
<dbReference type="OrthoDB" id="52918at2157"/>
<dbReference type="PhylomeDB" id="O28523"/>
<dbReference type="SABIO-RK" id="O28523"/>
<dbReference type="UniPathway" id="UPA00109">
    <property type="reaction ID" value="UER00186"/>
</dbReference>
<dbReference type="Proteomes" id="UP000002199">
    <property type="component" value="Chromosome"/>
</dbReference>
<dbReference type="GO" id="GO:0046872">
    <property type="term" value="F:metal ion binding"/>
    <property type="evidence" value="ECO:0007669"/>
    <property type="project" value="InterPro"/>
</dbReference>
<dbReference type="GO" id="GO:0004619">
    <property type="term" value="F:phosphoglycerate mutase activity"/>
    <property type="evidence" value="ECO:0007669"/>
    <property type="project" value="UniProtKB-EC"/>
</dbReference>
<dbReference type="GO" id="GO:0006096">
    <property type="term" value="P:glycolytic process"/>
    <property type="evidence" value="ECO:0007669"/>
    <property type="project" value="UniProtKB-UniRule"/>
</dbReference>
<dbReference type="CDD" id="cd16011">
    <property type="entry name" value="iPGM_like"/>
    <property type="match status" value="1"/>
</dbReference>
<dbReference type="Gene3D" id="3.40.720.10">
    <property type="entry name" value="Alkaline Phosphatase, subunit A"/>
    <property type="match status" value="2"/>
</dbReference>
<dbReference type="HAMAP" id="MF_01402_A">
    <property type="entry name" value="ApgM_A"/>
    <property type="match status" value="1"/>
</dbReference>
<dbReference type="InterPro" id="IPR017850">
    <property type="entry name" value="Alkaline_phosphatase_core_sf"/>
</dbReference>
<dbReference type="InterPro" id="IPR023665">
    <property type="entry name" value="ApgAM_prokaryotes"/>
</dbReference>
<dbReference type="InterPro" id="IPR006124">
    <property type="entry name" value="Metalloenzyme"/>
</dbReference>
<dbReference type="InterPro" id="IPR004456">
    <property type="entry name" value="Pglycerate_mutase_ApgM"/>
</dbReference>
<dbReference type="NCBIfam" id="TIGR00306">
    <property type="entry name" value="apgM"/>
    <property type="match status" value="1"/>
</dbReference>
<dbReference type="NCBIfam" id="NF003104">
    <property type="entry name" value="PRK04024.1"/>
    <property type="match status" value="1"/>
</dbReference>
<dbReference type="PANTHER" id="PTHR31209">
    <property type="entry name" value="COFACTOR-INDEPENDENT PHOSPHOGLYCERATE MUTASE"/>
    <property type="match status" value="1"/>
</dbReference>
<dbReference type="PANTHER" id="PTHR31209:SF0">
    <property type="entry name" value="METALLOENZYME DOMAIN-CONTAINING PROTEIN"/>
    <property type="match status" value="1"/>
</dbReference>
<dbReference type="Pfam" id="PF01676">
    <property type="entry name" value="Metalloenzyme"/>
    <property type="match status" value="1"/>
</dbReference>
<dbReference type="Pfam" id="PF10143">
    <property type="entry name" value="PhosphMutase"/>
    <property type="match status" value="1"/>
</dbReference>
<dbReference type="PIRSF" id="PIRSF006392">
    <property type="entry name" value="IPGAM_arch"/>
    <property type="match status" value="1"/>
</dbReference>
<dbReference type="SUPFAM" id="SSF53649">
    <property type="entry name" value="Alkaline phosphatase-like"/>
    <property type="match status" value="1"/>
</dbReference>